<keyword id="KW-1003">Cell membrane</keyword>
<keyword id="KW-0407">Ion channel</keyword>
<keyword id="KW-0406">Ion transport</keyword>
<keyword id="KW-0472">Membrane</keyword>
<keyword id="KW-0479">Metal-binding</keyword>
<keyword id="KW-1185">Reference proteome</keyword>
<keyword id="KW-0915">Sodium</keyword>
<keyword id="KW-0812">Transmembrane</keyword>
<keyword id="KW-1133">Transmembrane helix</keyword>
<keyword id="KW-0813">Transport</keyword>
<proteinExistence type="inferred from homology"/>
<gene>
    <name evidence="1" type="primary">fluC2</name>
    <name evidence="1" type="synonym">crcB2</name>
    <name type="ordered locus">GK2703</name>
</gene>
<feature type="chain" id="PRO_0000110103" description="Fluoride-specific ion channel FluC 2">
    <location>
        <begin position="1"/>
        <end position="129"/>
    </location>
</feature>
<feature type="transmembrane region" description="Helical" evidence="1">
    <location>
        <begin position="19"/>
        <end position="39"/>
    </location>
</feature>
<feature type="transmembrane region" description="Helical" evidence="1">
    <location>
        <begin position="95"/>
        <end position="115"/>
    </location>
</feature>
<feature type="binding site" evidence="1">
    <location>
        <position position="74"/>
    </location>
    <ligand>
        <name>Na(+)</name>
        <dbReference type="ChEBI" id="CHEBI:29101"/>
        <note>structural</note>
    </ligand>
</feature>
<feature type="binding site" evidence="1">
    <location>
        <position position="77"/>
    </location>
    <ligand>
        <name>Na(+)</name>
        <dbReference type="ChEBI" id="CHEBI:29101"/>
        <note>structural</note>
    </ligand>
</feature>
<accession>Q5KWE8</accession>
<evidence type="ECO:0000255" key="1">
    <source>
        <dbReference type="HAMAP-Rule" id="MF_00454"/>
    </source>
</evidence>
<protein>
    <recommendedName>
        <fullName evidence="1">Fluoride-specific ion channel FluC 2</fullName>
    </recommendedName>
</protein>
<reference key="1">
    <citation type="journal article" date="2004" name="Nucleic Acids Res.">
        <title>Thermoadaptation trait revealed by the genome sequence of thermophilic Geobacillus kaustophilus.</title>
        <authorList>
            <person name="Takami H."/>
            <person name="Takaki Y."/>
            <person name="Chee G.-J."/>
            <person name="Nishi S."/>
            <person name="Shimamura S."/>
            <person name="Suzuki H."/>
            <person name="Matsui S."/>
            <person name="Uchiyama I."/>
        </authorList>
    </citation>
    <scope>NUCLEOTIDE SEQUENCE [LARGE SCALE GENOMIC DNA]</scope>
    <source>
        <strain>HTA426</strain>
    </source>
</reference>
<comment type="function">
    <text evidence="1">Fluoride-specific ion channel. Important for reducing fluoride concentration in the cell, thus reducing its toxicity.</text>
</comment>
<comment type="catalytic activity">
    <reaction evidence="1">
        <text>fluoride(in) = fluoride(out)</text>
        <dbReference type="Rhea" id="RHEA:76159"/>
        <dbReference type="ChEBI" id="CHEBI:17051"/>
    </reaction>
    <physiologicalReaction direction="left-to-right" evidence="1">
        <dbReference type="Rhea" id="RHEA:76160"/>
    </physiologicalReaction>
</comment>
<comment type="activity regulation">
    <text evidence="1">Na(+) is not transported, but it plays an essential structural role and its presence is essential for fluoride channel function.</text>
</comment>
<comment type="subcellular location">
    <subcellularLocation>
        <location evidence="1">Cell membrane</location>
        <topology evidence="1">Multi-pass membrane protein</topology>
    </subcellularLocation>
</comment>
<comment type="similarity">
    <text evidence="1">Belongs to the fluoride channel Fluc/FEX (TC 1.A.43) family.</text>
</comment>
<name>FLUC2_GEOKA</name>
<organism>
    <name type="scientific">Geobacillus kaustophilus (strain HTA426)</name>
    <dbReference type="NCBI Taxonomy" id="235909"/>
    <lineage>
        <taxon>Bacteria</taxon>
        <taxon>Bacillati</taxon>
        <taxon>Bacillota</taxon>
        <taxon>Bacilli</taxon>
        <taxon>Bacillales</taxon>
        <taxon>Anoxybacillaceae</taxon>
        <taxon>Geobacillus</taxon>
        <taxon>Geobacillus thermoleovorans group</taxon>
    </lineage>
</organism>
<sequence length="129" mass="13680">MVYLAVGIAGMIGALVRYGLGLVVPAAAVGGFPLGTLFINWTGSFLLSWFTVMFTRRPAWPPWLKTAVTTGFVGSYTTFSTLSVECVELMEQGRFGMAAVYIAASLFGGLLASWAGYAAAQPERKEGIG</sequence>
<dbReference type="EMBL" id="BA000043">
    <property type="protein sequence ID" value="BAD76988.1"/>
    <property type="molecule type" value="Genomic_DNA"/>
</dbReference>
<dbReference type="SMR" id="Q5KWE8"/>
<dbReference type="STRING" id="235909.GK2703"/>
<dbReference type="KEGG" id="gka:GK2703"/>
<dbReference type="eggNOG" id="COG0239">
    <property type="taxonomic scope" value="Bacteria"/>
</dbReference>
<dbReference type="HOGENOM" id="CLU_114342_1_2_9"/>
<dbReference type="Proteomes" id="UP000001172">
    <property type="component" value="Chromosome"/>
</dbReference>
<dbReference type="GO" id="GO:0005886">
    <property type="term" value="C:plasma membrane"/>
    <property type="evidence" value="ECO:0007669"/>
    <property type="project" value="UniProtKB-SubCell"/>
</dbReference>
<dbReference type="GO" id="GO:0062054">
    <property type="term" value="F:fluoride channel activity"/>
    <property type="evidence" value="ECO:0007669"/>
    <property type="project" value="UniProtKB-UniRule"/>
</dbReference>
<dbReference type="GO" id="GO:0046872">
    <property type="term" value="F:metal ion binding"/>
    <property type="evidence" value="ECO:0007669"/>
    <property type="project" value="UniProtKB-KW"/>
</dbReference>
<dbReference type="GO" id="GO:0140114">
    <property type="term" value="P:cellular detoxification of fluoride"/>
    <property type="evidence" value="ECO:0007669"/>
    <property type="project" value="UniProtKB-UniRule"/>
</dbReference>
<dbReference type="HAMAP" id="MF_00454">
    <property type="entry name" value="FluC"/>
    <property type="match status" value="1"/>
</dbReference>
<dbReference type="InterPro" id="IPR003691">
    <property type="entry name" value="FluC"/>
</dbReference>
<dbReference type="NCBIfam" id="TIGR00494">
    <property type="entry name" value="crcB"/>
    <property type="match status" value="1"/>
</dbReference>
<dbReference type="PANTHER" id="PTHR28259">
    <property type="entry name" value="FLUORIDE EXPORT PROTEIN 1-RELATED"/>
    <property type="match status" value="1"/>
</dbReference>
<dbReference type="PANTHER" id="PTHR28259:SF1">
    <property type="entry name" value="FLUORIDE EXPORT PROTEIN 1-RELATED"/>
    <property type="match status" value="1"/>
</dbReference>
<dbReference type="Pfam" id="PF02537">
    <property type="entry name" value="CRCB"/>
    <property type="match status" value="1"/>
</dbReference>